<sequence length="272" mass="29305">METYAVFGNPIAHSKSPFIHQQFAQQLDIVHPYGRVLAPINNFINTLDAFFAAGGKGANITVPFKEEAFARSDELTERASLAGAVNTLKRLEDGRLLGDNTDGIGLLSDLERLNFIRPGLRILLIGAGGASRGVLLPLLSLDCAVTITNRTASRAEALAKIFAHTGSVHATDMDKLDGCEFDLIINATSSGIRGEIPAIPASLIHPSLCCYDMFYQKGNTPFLSWCVQQGAKRYADGLGMLVGQAAHAVLLWHGVLPQVEPVIELLQQELLA</sequence>
<dbReference type="EC" id="1.1.1.25" evidence="1"/>
<dbReference type="EMBL" id="AM933172">
    <property type="protein sequence ID" value="CAR34804.1"/>
    <property type="molecule type" value="Genomic_DNA"/>
</dbReference>
<dbReference type="RefSeq" id="WP_000451194.1">
    <property type="nucleotide sequence ID" value="NC_011294.1"/>
</dbReference>
<dbReference type="SMR" id="B5R1D8"/>
<dbReference type="KEGG" id="set:SEN3229"/>
<dbReference type="HOGENOM" id="CLU_044063_2_1_6"/>
<dbReference type="UniPathway" id="UPA00053">
    <property type="reaction ID" value="UER00087"/>
</dbReference>
<dbReference type="Proteomes" id="UP000000613">
    <property type="component" value="Chromosome"/>
</dbReference>
<dbReference type="GO" id="GO:0005829">
    <property type="term" value="C:cytosol"/>
    <property type="evidence" value="ECO:0007669"/>
    <property type="project" value="TreeGrafter"/>
</dbReference>
<dbReference type="GO" id="GO:0050661">
    <property type="term" value="F:NADP binding"/>
    <property type="evidence" value="ECO:0007669"/>
    <property type="project" value="InterPro"/>
</dbReference>
<dbReference type="GO" id="GO:0004764">
    <property type="term" value="F:shikimate 3-dehydrogenase (NADP+) activity"/>
    <property type="evidence" value="ECO:0007669"/>
    <property type="project" value="UniProtKB-UniRule"/>
</dbReference>
<dbReference type="GO" id="GO:0008652">
    <property type="term" value="P:amino acid biosynthetic process"/>
    <property type="evidence" value="ECO:0007669"/>
    <property type="project" value="UniProtKB-KW"/>
</dbReference>
<dbReference type="GO" id="GO:0009073">
    <property type="term" value="P:aromatic amino acid family biosynthetic process"/>
    <property type="evidence" value="ECO:0007669"/>
    <property type="project" value="UniProtKB-KW"/>
</dbReference>
<dbReference type="GO" id="GO:0009423">
    <property type="term" value="P:chorismate biosynthetic process"/>
    <property type="evidence" value="ECO:0007669"/>
    <property type="project" value="UniProtKB-UniRule"/>
</dbReference>
<dbReference type="GO" id="GO:0019632">
    <property type="term" value="P:shikimate metabolic process"/>
    <property type="evidence" value="ECO:0007669"/>
    <property type="project" value="InterPro"/>
</dbReference>
<dbReference type="CDD" id="cd01065">
    <property type="entry name" value="NAD_bind_Shikimate_DH"/>
    <property type="match status" value="1"/>
</dbReference>
<dbReference type="FunFam" id="3.40.50.10860:FF:000006">
    <property type="entry name" value="Shikimate dehydrogenase (NADP(+))"/>
    <property type="match status" value="1"/>
</dbReference>
<dbReference type="FunFam" id="3.40.50.720:FF:000104">
    <property type="entry name" value="Shikimate dehydrogenase (NADP(+))"/>
    <property type="match status" value="1"/>
</dbReference>
<dbReference type="Gene3D" id="3.40.50.10860">
    <property type="entry name" value="Leucine Dehydrogenase, chain A, domain 1"/>
    <property type="match status" value="1"/>
</dbReference>
<dbReference type="Gene3D" id="3.40.50.720">
    <property type="entry name" value="NAD(P)-binding Rossmann-like Domain"/>
    <property type="match status" value="1"/>
</dbReference>
<dbReference type="HAMAP" id="MF_00222">
    <property type="entry name" value="Shikimate_DH_AroE"/>
    <property type="match status" value="1"/>
</dbReference>
<dbReference type="InterPro" id="IPR046346">
    <property type="entry name" value="Aminoacid_DH-like_N_sf"/>
</dbReference>
<dbReference type="InterPro" id="IPR036291">
    <property type="entry name" value="NAD(P)-bd_dom_sf"/>
</dbReference>
<dbReference type="InterPro" id="IPR041121">
    <property type="entry name" value="SDH_C"/>
</dbReference>
<dbReference type="InterPro" id="IPR011342">
    <property type="entry name" value="Shikimate_DH"/>
</dbReference>
<dbReference type="InterPro" id="IPR013708">
    <property type="entry name" value="Shikimate_DH-bd_N"/>
</dbReference>
<dbReference type="InterPro" id="IPR022893">
    <property type="entry name" value="Shikimate_DH_fam"/>
</dbReference>
<dbReference type="InterPro" id="IPR006151">
    <property type="entry name" value="Shikm_DH/Glu-tRNA_Rdtase"/>
</dbReference>
<dbReference type="NCBIfam" id="TIGR00507">
    <property type="entry name" value="aroE"/>
    <property type="match status" value="1"/>
</dbReference>
<dbReference type="NCBIfam" id="NF001310">
    <property type="entry name" value="PRK00258.1-2"/>
    <property type="match status" value="1"/>
</dbReference>
<dbReference type="PANTHER" id="PTHR21089:SF1">
    <property type="entry name" value="BIFUNCTIONAL 3-DEHYDROQUINATE DEHYDRATASE_SHIKIMATE DEHYDROGENASE, CHLOROPLASTIC"/>
    <property type="match status" value="1"/>
</dbReference>
<dbReference type="PANTHER" id="PTHR21089">
    <property type="entry name" value="SHIKIMATE DEHYDROGENASE"/>
    <property type="match status" value="1"/>
</dbReference>
<dbReference type="Pfam" id="PF18317">
    <property type="entry name" value="SDH_C"/>
    <property type="match status" value="1"/>
</dbReference>
<dbReference type="Pfam" id="PF01488">
    <property type="entry name" value="Shikimate_DH"/>
    <property type="match status" value="1"/>
</dbReference>
<dbReference type="Pfam" id="PF08501">
    <property type="entry name" value="Shikimate_dh_N"/>
    <property type="match status" value="1"/>
</dbReference>
<dbReference type="SUPFAM" id="SSF53223">
    <property type="entry name" value="Aminoacid dehydrogenase-like, N-terminal domain"/>
    <property type="match status" value="1"/>
</dbReference>
<dbReference type="SUPFAM" id="SSF51735">
    <property type="entry name" value="NAD(P)-binding Rossmann-fold domains"/>
    <property type="match status" value="1"/>
</dbReference>
<feature type="chain" id="PRO_1000100135" description="Shikimate dehydrogenase (NADP(+))">
    <location>
        <begin position="1"/>
        <end position="272"/>
    </location>
</feature>
<feature type="active site" description="Proton acceptor" evidence="1">
    <location>
        <position position="65"/>
    </location>
</feature>
<feature type="binding site" evidence="1">
    <location>
        <begin position="14"/>
        <end position="16"/>
    </location>
    <ligand>
        <name>shikimate</name>
        <dbReference type="ChEBI" id="CHEBI:36208"/>
    </ligand>
</feature>
<feature type="binding site" evidence="1">
    <location>
        <position position="61"/>
    </location>
    <ligand>
        <name>shikimate</name>
        <dbReference type="ChEBI" id="CHEBI:36208"/>
    </ligand>
</feature>
<feature type="binding site" evidence="1">
    <location>
        <position position="77"/>
    </location>
    <ligand>
        <name>NADP(+)</name>
        <dbReference type="ChEBI" id="CHEBI:58349"/>
    </ligand>
</feature>
<feature type="binding site" evidence="1">
    <location>
        <position position="86"/>
    </location>
    <ligand>
        <name>shikimate</name>
        <dbReference type="ChEBI" id="CHEBI:36208"/>
    </ligand>
</feature>
<feature type="binding site" evidence="1">
    <location>
        <position position="102"/>
    </location>
    <ligand>
        <name>shikimate</name>
        <dbReference type="ChEBI" id="CHEBI:36208"/>
    </ligand>
</feature>
<feature type="binding site" evidence="1">
    <location>
        <begin position="126"/>
        <end position="130"/>
    </location>
    <ligand>
        <name>NADP(+)</name>
        <dbReference type="ChEBI" id="CHEBI:58349"/>
    </ligand>
</feature>
<feature type="binding site" evidence="1">
    <location>
        <begin position="149"/>
        <end position="154"/>
    </location>
    <ligand>
        <name>NADP(+)</name>
        <dbReference type="ChEBI" id="CHEBI:58349"/>
    </ligand>
</feature>
<feature type="binding site" evidence="1">
    <location>
        <position position="213"/>
    </location>
    <ligand>
        <name>NADP(+)</name>
        <dbReference type="ChEBI" id="CHEBI:58349"/>
    </ligand>
</feature>
<feature type="binding site" evidence="1">
    <location>
        <position position="215"/>
    </location>
    <ligand>
        <name>shikimate</name>
        <dbReference type="ChEBI" id="CHEBI:36208"/>
    </ligand>
</feature>
<feature type="binding site" evidence="1">
    <location>
        <position position="237"/>
    </location>
    <ligand>
        <name>NADP(+)</name>
        <dbReference type="ChEBI" id="CHEBI:58349"/>
    </ligand>
</feature>
<keyword id="KW-0028">Amino-acid biosynthesis</keyword>
<keyword id="KW-0057">Aromatic amino acid biosynthesis</keyword>
<keyword id="KW-0521">NADP</keyword>
<keyword id="KW-0560">Oxidoreductase</keyword>
<accession>B5R1D8</accession>
<gene>
    <name evidence="1" type="primary">aroE</name>
    <name type="ordered locus">SEN3229</name>
</gene>
<reference key="1">
    <citation type="journal article" date="2008" name="Genome Res.">
        <title>Comparative genome analysis of Salmonella enteritidis PT4 and Salmonella gallinarum 287/91 provides insights into evolutionary and host adaptation pathways.</title>
        <authorList>
            <person name="Thomson N.R."/>
            <person name="Clayton D.J."/>
            <person name="Windhorst D."/>
            <person name="Vernikos G."/>
            <person name="Davidson S."/>
            <person name="Churcher C."/>
            <person name="Quail M.A."/>
            <person name="Stevens M."/>
            <person name="Jones M.A."/>
            <person name="Watson M."/>
            <person name="Barron A."/>
            <person name="Layton A."/>
            <person name="Pickard D."/>
            <person name="Kingsley R.A."/>
            <person name="Bignell A."/>
            <person name="Clark L."/>
            <person name="Harris B."/>
            <person name="Ormond D."/>
            <person name="Abdellah Z."/>
            <person name="Brooks K."/>
            <person name="Cherevach I."/>
            <person name="Chillingworth T."/>
            <person name="Woodward J."/>
            <person name="Norberczak H."/>
            <person name="Lord A."/>
            <person name="Arrowsmith C."/>
            <person name="Jagels K."/>
            <person name="Moule S."/>
            <person name="Mungall K."/>
            <person name="Saunders M."/>
            <person name="Whitehead S."/>
            <person name="Chabalgoity J.A."/>
            <person name="Maskell D."/>
            <person name="Humphreys T."/>
            <person name="Roberts M."/>
            <person name="Barrow P.A."/>
            <person name="Dougan G."/>
            <person name="Parkhill J."/>
        </authorList>
    </citation>
    <scope>NUCLEOTIDE SEQUENCE [LARGE SCALE GENOMIC DNA]</scope>
    <source>
        <strain>P125109</strain>
    </source>
</reference>
<evidence type="ECO:0000255" key="1">
    <source>
        <dbReference type="HAMAP-Rule" id="MF_00222"/>
    </source>
</evidence>
<organism>
    <name type="scientific">Salmonella enteritidis PT4 (strain P125109)</name>
    <dbReference type="NCBI Taxonomy" id="550537"/>
    <lineage>
        <taxon>Bacteria</taxon>
        <taxon>Pseudomonadati</taxon>
        <taxon>Pseudomonadota</taxon>
        <taxon>Gammaproteobacteria</taxon>
        <taxon>Enterobacterales</taxon>
        <taxon>Enterobacteriaceae</taxon>
        <taxon>Salmonella</taxon>
    </lineage>
</organism>
<protein>
    <recommendedName>
        <fullName evidence="1">Shikimate dehydrogenase (NADP(+))</fullName>
        <shortName evidence="1">SDH</shortName>
        <ecNumber evidence="1">1.1.1.25</ecNumber>
    </recommendedName>
</protein>
<proteinExistence type="inferred from homology"/>
<name>AROE_SALEP</name>
<comment type="function">
    <text evidence="1">Involved in the biosynthesis of the chorismate, which leads to the biosynthesis of aromatic amino acids. Catalyzes the reversible NADPH linked reduction of 3-dehydroshikimate (DHSA) to yield shikimate (SA).</text>
</comment>
<comment type="catalytic activity">
    <reaction evidence="1">
        <text>shikimate + NADP(+) = 3-dehydroshikimate + NADPH + H(+)</text>
        <dbReference type="Rhea" id="RHEA:17737"/>
        <dbReference type="ChEBI" id="CHEBI:15378"/>
        <dbReference type="ChEBI" id="CHEBI:16630"/>
        <dbReference type="ChEBI" id="CHEBI:36208"/>
        <dbReference type="ChEBI" id="CHEBI:57783"/>
        <dbReference type="ChEBI" id="CHEBI:58349"/>
        <dbReference type="EC" id="1.1.1.25"/>
    </reaction>
</comment>
<comment type="pathway">
    <text evidence="1">Metabolic intermediate biosynthesis; chorismate biosynthesis; chorismate from D-erythrose 4-phosphate and phosphoenolpyruvate: step 4/7.</text>
</comment>
<comment type="subunit">
    <text evidence="1">Homodimer.</text>
</comment>
<comment type="similarity">
    <text evidence="1">Belongs to the shikimate dehydrogenase family.</text>
</comment>